<name>COXX_BACAH</name>
<reference key="1">
    <citation type="journal article" date="2007" name="J. Bacteriol.">
        <title>The complete genome sequence of Bacillus thuringiensis Al Hakam.</title>
        <authorList>
            <person name="Challacombe J.F."/>
            <person name="Altherr M.R."/>
            <person name="Xie G."/>
            <person name="Bhotika S.S."/>
            <person name="Brown N."/>
            <person name="Bruce D."/>
            <person name="Campbell C.S."/>
            <person name="Campbell M.L."/>
            <person name="Chen J."/>
            <person name="Chertkov O."/>
            <person name="Cleland C."/>
            <person name="Dimitrijevic M."/>
            <person name="Doggett N.A."/>
            <person name="Fawcett J.J."/>
            <person name="Glavina T."/>
            <person name="Goodwin L.A."/>
            <person name="Green L.D."/>
            <person name="Han C.S."/>
            <person name="Hill K.K."/>
            <person name="Hitchcock P."/>
            <person name="Jackson P.J."/>
            <person name="Keim P."/>
            <person name="Kewalramani A.R."/>
            <person name="Longmire J."/>
            <person name="Lucas S."/>
            <person name="Malfatti S."/>
            <person name="Martinez D."/>
            <person name="McMurry K."/>
            <person name="Meincke L.J."/>
            <person name="Misra M."/>
            <person name="Moseman B.L."/>
            <person name="Mundt M."/>
            <person name="Munk A.C."/>
            <person name="Okinaka R.T."/>
            <person name="Parson-Quintana B."/>
            <person name="Reilly L.P."/>
            <person name="Richardson P."/>
            <person name="Robinson D.L."/>
            <person name="Saunders E."/>
            <person name="Tapia R."/>
            <person name="Tesmer J.G."/>
            <person name="Thayer N."/>
            <person name="Thompson L.S."/>
            <person name="Tice H."/>
            <person name="Ticknor L.O."/>
            <person name="Wills P.L."/>
            <person name="Gilna P."/>
            <person name="Brettin T.S."/>
        </authorList>
    </citation>
    <scope>NUCLEOTIDE SEQUENCE [LARGE SCALE GENOMIC DNA]</scope>
    <source>
        <strain>Al Hakam</strain>
    </source>
</reference>
<sequence length="307" mass="34531">MNHATSELHDESAVTSIPETTRLQDLKALVKMGIVNSNTLTVFTGFWLALHFNGLSVLDNLDKLFFTIVGSGLVMAGVCCLNNYIDRDIDPLMERTKTRPTVTGKYKPGFALTFGLVILLLGFVFLLLTTPMAVLMGFIGAFTYVVLYSLWTKRKYTLNTVVGSISGAVPPLIGWAAIDPSLGHPIAWMLFLIMFIWQIPHFLALAMKRVDEYRNAGIPMLPVVHGFEITKRQIMIWTVCLLPLPFYMSGLGITFMVIATLLNIGWIVLGFYGFRKKDDIKWSVQMFVYSLNYLTILFVSMIVVTFF</sequence>
<keyword id="KW-1003">Cell membrane</keyword>
<keyword id="KW-0350">Heme biosynthesis</keyword>
<keyword id="KW-0472">Membrane</keyword>
<keyword id="KW-0808">Transferase</keyword>
<keyword id="KW-0812">Transmembrane</keyword>
<keyword id="KW-1133">Transmembrane helix</keyword>
<evidence type="ECO:0000255" key="1">
    <source>
        <dbReference type="HAMAP-Rule" id="MF_00154"/>
    </source>
</evidence>
<evidence type="ECO:0000305" key="2"/>
<feature type="chain" id="PRO_0000327008" description="Protoheme IX farnesyltransferase">
    <location>
        <begin position="1"/>
        <end position="307"/>
    </location>
</feature>
<feature type="transmembrane region" description="Helical" evidence="1">
    <location>
        <begin position="38"/>
        <end position="58"/>
    </location>
</feature>
<feature type="transmembrane region" description="Helical" evidence="1">
    <location>
        <begin position="65"/>
        <end position="85"/>
    </location>
</feature>
<feature type="transmembrane region" description="Helical" evidence="1">
    <location>
        <begin position="108"/>
        <end position="128"/>
    </location>
</feature>
<feature type="transmembrane region" description="Helical" evidence="1">
    <location>
        <begin position="131"/>
        <end position="151"/>
    </location>
</feature>
<feature type="transmembrane region" description="Helical" evidence="1">
    <location>
        <begin position="158"/>
        <end position="178"/>
    </location>
</feature>
<feature type="transmembrane region" description="Helical" evidence="1">
    <location>
        <begin position="186"/>
        <end position="206"/>
    </location>
</feature>
<feature type="transmembrane region" description="Helical" evidence="1">
    <location>
        <begin position="251"/>
        <end position="271"/>
    </location>
</feature>
<feature type="transmembrane region" description="Helical" evidence="1">
    <location>
        <begin position="287"/>
        <end position="307"/>
    </location>
</feature>
<organism>
    <name type="scientific">Bacillus thuringiensis (strain Al Hakam)</name>
    <dbReference type="NCBI Taxonomy" id="412694"/>
    <lineage>
        <taxon>Bacteria</taxon>
        <taxon>Bacillati</taxon>
        <taxon>Bacillota</taxon>
        <taxon>Bacilli</taxon>
        <taxon>Bacillales</taxon>
        <taxon>Bacillaceae</taxon>
        <taxon>Bacillus</taxon>
        <taxon>Bacillus cereus group</taxon>
    </lineage>
</organism>
<accession>A0RHW3</accession>
<protein>
    <recommendedName>
        <fullName evidence="1">Protoheme IX farnesyltransferase</fullName>
        <ecNumber evidence="1">2.5.1.141</ecNumber>
    </recommendedName>
    <alternativeName>
        <fullName evidence="1">Heme B farnesyltransferase</fullName>
    </alternativeName>
    <alternativeName>
        <fullName evidence="1">Heme O synthase</fullName>
    </alternativeName>
</protein>
<proteinExistence type="inferred from homology"/>
<comment type="function">
    <text evidence="1">Converts heme B (protoheme IX) to heme O by substitution of the vinyl group on carbon 2 of heme B porphyrin ring with a hydroxyethyl farnesyl side group.</text>
</comment>
<comment type="catalytic activity">
    <reaction evidence="1">
        <text>heme b + (2E,6E)-farnesyl diphosphate + H2O = Fe(II)-heme o + diphosphate</text>
        <dbReference type="Rhea" id="RHEA:28070"/>
        <dbReference type="ChEBI" id="CHEBI:15377"/>
        <dbReference type="ChEBI" id="CHEBI:33019"/>
        <dbReference type="ChEBI" id="CHEBI:60344"/>
        <dbReference type="ChEBI" id="CHEBI:60530"/>
        <dbReference type="ChEBI" id="CHEBI:175763"/>
        <dbReference type="EC" id="2.5.1.141"/>
    </reaction>
</comment>
<comment type="pathway">
    <text evidence="1">Porphyrin-containing compound metabolism; heme O biosynthesis; heme O from protoheme: step 1/1.</text>
</comment>
<comment type="subunit">
    <text evidence="1">Interacts with CtaA.</text>
</comment>
<comment type="subcellular location">
    <subcellularLocation>
        <location evidence="1">Cell membrane</location>
        <topology evidence="1">Multi-pass membrane protein</topology>
    </subcellularLocation>
</comment>
<comment type="miscellaneous">
    <text evidence="1">Carbon 2 of the heme B porphyrin ring is defined according to the Fischer nomenclature.</text>
</comment>
<comment type="similarity">
    <text evidence="1">Belongs to the UbiA prenyltransferase family. Protoheme IX farnesyltransferase subfamily.</text>
</comment>
<comment type="sequence caution" evidence="2">
    <conflict type="erroneous initiation">
        <sequence resource="EMBL-CDS" id="ABK86806"/>
    </conflict>
</comment>
<dbReference type="EC" id="2.5.1.141" evidence="1"/>
<dbReference type="EMBL" id="CP000485">
    <property type="protein sequence ID" value="ABK86806.1"/>
    <property type="status" value="ALT_INIT"/>
    <property type="molecule type" value="Genomic_DNA"/>
</dbReference>
<dbReference type="RefSeq" id="WP_001015051.1">
    <property type="nucleotide sequence ID" value="NC_008600.1"/>
</dbReference>
<dbReference type="SMR" id="A0RHW3"/>
<dbReference type="KEGG" id="btl:BALH_3573"/>
<dbReference type="HOGENOM" id="CLU_029631_0_0_9"/>
<dbReference type="UniPathway" id="UPA00834">
    <property type="reaction ID" value="UER00712"/>
</dbReference>
<dbReference type="GO" id="GO:0005886">
    <property type="term" value="C:plasma membrane"/>
    <property type="evidence" value="ECO:0007669"/>
    <property type="project" value="UniProtKB-SubCell"/>
</dbReference>
<dbReference type="GO" id="GO:0008495">
    <property type="term" value="F:protoheme IX farnesyltransferase activity"/>
    <property type="evidence" value="ECO:0007669"/>
    <property type="project" value="UniProtKB-UniRule"/>
</dbReference>
<dbReference type="GO" id="GO:0048034">
    <property type="term" value="P:heme O biosynthetic process"/>
    <property type="evidence" value="ECO:0007669"/>
    <property type="project" value="UniProtKB-UniRule"/>
</dbReference>
<dbReference type="CDD" id="cd13957">
    <property type="entry name" value="PT_UbiA_Cox10"/>
    <property type="match status" value="1"/>
</dbReference>
<dbReference type="FunFam" id="1.10.357.140:FF:000001">
    <property type="entry name" value="Protoheme IX farnesyltransferase"/>
    <property type="match status" value="1"/>
</dbReference>
<dbReference type="Gene3D" id="1.10.357.140">
    <property type="entry name" value="UbiA prenyltransferase"/>
    <property type="match status" value="1"/>
</dbReference>
<dbReference type="HAMAP" id="MF_00154">
    <property type="entry name" value="CyoE_CtaB"/>
    <property type="match status" value="1"/>
</dbReference>
<dbReference type="InterPro" id="IPR006369">
    <property type="entry name" value="Protohaem_IX_farnesylTrfase"/>
</dbReference>
<dbReference type="InterPro" id="IPR000537">
    <property type="entry name" value="UbiA_prenyltransferase"/>
</dbReference>
<dbReference type="InterPro" id="IPR030470">
    <property type="entry name" value="UbiA_prenylTrfase_CS"/>
</dbReference>
<dbReference type="InterPro" id="IPR044878">
    <property type="entry name" value="UbiA_sf"/>
</dbReference>
<dbReference type="NCBIfam" id="TIGR01473">
    <property type="entry name" value="cyoE_ctaB"/>
    <property type="match status" value="1"/>
</dbReference>
<dbReference type="PANTHER" id="PTHR43448">
    <property type="entry name" value="PROTOHEME IX FARNESYLTRANSFERASE, MITOCHONDRIAL"/>
    <property type="match status" value="1"/>
</dbReference>
<dbReference type="PANTHER" id="PTHR43448:SF2">
    <property type="entry name" value="PROTOHEME IX FARNESYLTRANSFERASE, MITOCHONDRIAL"/>
    <property type="match status" value="1"/>
</dbReference>
<dbReference type="Pfam" id="PF01040">
    <property type="entry name" value="UbiA"/>
    <property type="match status" value="1"/>
</dbReference>
<dbReference type="PROSITE" id="PS00943">
    <property type="entry name" value="UBIA"/>
    <property type="match status" value="1"/>
</dbReference>
<gene>
    <name evidence="1" type="primary">ctaB</name>
    <name type="ordered locus">BALH_3573</name>
</gene>